<accession>Q11CT4</accession>
<comment type="catalytic activity">
    <reaction evidence="1">
        <text>(6R)-10-formyltetrahydrofolate + 5-amino-1-(5-phospho-beta-D-ribosyl)imidazole-4-carboxamide = 5-formamido-1-(5-phospho-D-ribosyl)imidazole-4-carboxamide + (6S)-5,6,7,8-tetrahydrofolate</text>
        <dbReference type="Rhea" id="RHEA:22192"/>
        <dbReference type="ChEBI" id="CHEBI:57453"/>
        <dbReference type="ChEBI" id="CHEBI:58467"/>
        <dbReference type="ChEBI" id="CHEBI:58475"/>
        <dbReference type="ChEBI" id="CHEBI:195366"/>
        <dbReference type="EC" id="2.1.2.3"/>
    </reaction>
</comment>
<comment type="catalytic activity">
    <reaction evidence="1">
        <text>IMP + H2O = 5-formamido-1-(5-phospho-D-ribosyl)imidazole-4-carboxamide</text>
        <dbReference type="Rhea" id="RHEA:18445"/>
        <dbReference type="ChEBI" id="CHEBI:15377"/>
        <dbReference type="ChEBI" id="CHEBI:58053"/>
        <dbReference type="ChEBI" id="CHEBI:58467"/>
        <dbReference type="EC" id="3.5.4.10"/>
    </reaction>
</comment>
<comment type="pathway">
    <text evidence="1">Purine metabolism; IMP biosynthesis via de novo pathway; 5-formamido-1-(5-phospho-D-ribosyl)imidazole-4-carboxamide from 5-amino-1-(5-phospho-D-ribosyl)imidazole-4-carboxamide (10-formyl THF route): step 1/1.</text>
</comment>
<comment type="pathway">
    <text evidence="1">Purine metabolism; IMP biosynthesis via de novo pathway; IMP from 5-formamido-1-(5-phospho-D-ribosyl)imidazole-4-carboxamide: step 1/1.</text>
</comment>
<comment type="domain">
    <text evidence="1">The IMP cyclohydrolase activity resides in the N-terminal region.</text>
</comment>
<comment type="similarity">
    <text evidence="1">Belongs to the PurH family.</text>
</comment>
<proteinExistence type="inferred from homology"/>
<gene>
    <name evidence="1" type="primary">purH</name>
    <name type="ordered locus">Meso_3420</name>
</gene>
<organism>
    <name type="scientific">Chelativorans sp. (strain BNC1)</name>
    <dbReference type="NCBI Taxonomy" id="266779"/>
    <lineage>
        <taxon>Bacteria</taxon>
        <taxon>Pseudomonadati</taxon>
        <taxon>Pseudomonadota</taxon>
        <taxon>Alphaproteobacteria</taxon>
        <taxon>Hyphomicrobiales</taxon>
        <taxon>Phyllobacteriaceae</taxon>
        <taxon>Chelativorans</taxon>
    </lineage>
</organism>
<sequence length="537" mass="56842">MTVSAKNIPAPDLVPVRRALISVSDKTGIVDFARSLAAREVALASTGGTAALLARSGIGVMDVSQLTGFPEIMDGRVKTLHPAVHGGLLAIRDDPDHRSAMETHAIKPIDLVVINLYPFEDVRFGGGDYAATVENIDIGGPAMLRAAAKNHAYVAVVTDPADYARVLEALEKNDGALPYRLRQELAAKAYARTAAYDAAISQWFAESLAIAEPEWRSFGGRLAQVMRYGENPHQQAGFYATGEKRPGVATARQVQGKQLSYNNINDTDAAFELVCEFDPKKVAAVAIIKHANPCGVAEGTSLAEAYRKALACDPVSAFGGIVALNRILDAEAAEEIAKIFTEVIIAPDATEEAQAIIATKKNLRLLLTEGVADPRAPGLSAKTVAGGLLVQTRDNGVIDDLDLRVVTRRAPSEKEMANLKFAFRVAKHVKSNAIVYARDLATVGIGAGQMSRVDSARIAARKAEDAAAAAGGQPLTKGSVVASDAFFPFADGLLSAVEAGATAVIQPGGSMRDDEVIKAADEHGIAMVFTGMRHFRH</sequence>
<feature type="chain" id="PRO_1000018908" description="Bifunctional purine biosynthesis protein PurH">
    <location>
        <begin position="1"/>
        <end position="537"/>
    </location>
</feature>
<feature type="domain" description="MGS-like" evidence="2">
    <location>
        <begin position="8"/>
        <end position="158"/>
    </location>
</feature>
<evidence type="ECO:0000255" key="1">
    <source>
        <dbReference type="HAMAP-Rule" id="MF_00139"/>
    </source>
</evidence>
<evidence type="ECO:0000255" key="2">
    <source>
        <dbReference type="PROSITE-ProRule" id="PRU01202"/>
    </source>
</evidence>
<dbReference type="EC" id="2.1.2.3" evidence="1"/>
<dbReference type="EC" id="3.5.4.10" evidence="1"/>
<dbReference type="EMBL" id="CP000390">
    <property type="protein sequence ID" value="ABG64791.1"/>
    <property type="molecule type" value="Genomic_DNA"/>
</dbReference>
<dbReference type="SMR" id="Q11CT4"/>
<dbReference type="STRING" id="266779.Meso_3420"/>
<dbReference type="KEGG" id="mes:Meso_3420"/>
<dbReference type="eggNOG" id="COG0138">
    <property type="taxonomic scope" value="Bacteria"/>
</dbReference>
<dbReference type="HOGENOM" id="CLU_016316_5_2_5"/>
<dbReference type="OrthoDB" id="9802065at2"/>
<dbReference type="UniPathway" id="UPA00074">
    <property type="reaction ID" value="UER00133"/>
</dbReference>
<dbReference type="UniPathway" id="UPA00074">
    <property type="reaction ID" value="UER00135"/>
</dbReference>
<dbReference type="GO" id="GO:0005829">
    <property type="term" value="C:cytosol"/>
    <property type="evidence" value="ECO:0007669"/>
    <property type="project" value="TreeGrafter"/>
</dbReference>
<dbReference type="GO" id="GO:0003937">
    <property type="term" value="F:IMP cyclohydrolase activity"/>
    <property type="evidence" value="ECO:0007669"/>
    <property type="project" value="UniProtKB-UniRule"/>
</dbReference>
<dbReference type="GO" id="GO:0004643">
    <property type="term" value="F:phosphoribosylaminoimidazolecarboxamide formyltransferase activity"/>
    <property type="evidence" value="ECO:0007669"/>
    <property type="project" value="UniProtKB-UniRule"/>
</dbReference>
<dbReference type="GO" id="GO:0006189">
    <property type="term" value="P:'de novo' IMP biosynthetic process"/>
    <property type="evidence" value="ECO:0007669"/>
    <property type="project" value="UniProtKB-UniRule"/>
</dbReference>
<dbReference type="CDD" id="cd01421">
    <property type="entry name" value="IMPCH"/>
    <property type="match status" value="1"/>
</dbReference>
<dbReference type="FunFam" id="3.40.140.20:FF:000001">
    <property type="entry name" value="Bifunctional purine biosynthesis protein PurH"/>
    <property type="match status" value="1"/>
</dbReference>
<dbReference type="FunFam" id="3.40.140.20:FF:000002">
    <property type="entry name" value="Bifunctional purine biosynthesis protein PurH"/>
    <property type="match status" value="1"/>
</dbReference>
<dbReference type="FunFam" id="3.40.50.1380:FF:000001">
    <property type="entry name" value="Bifunctional purine biosynthesis protein PurH"/>
    <property type="match status" value="1"/>
</dbReference>
<dbReference type="Gene3D" id="3.40.140.20">
    <property type="match status" value="2"/>
</dbReference>
<dbReference type="Gene3D" id="3.40.50.1380">
    <property type="entry name" value="Methylglyoxal synthase-like domain"/>
    <property type="match status" value="1"/>
</dbReference>
<dbReference type="HAMAP" id="MF_00139">
    <property type="entry name" value="PurH"/>
    <property type="match status" value="1"/>
</dbReference>
<dbReference type="InterPro" id="IPR024051">
    <property type="entry name" value="AICAR_Tfase_dup_dom_sf"/>
</dbReference>
<dbReference type="InterPro" id="IPR016193">
    <property type="entry name" value="Cytidine_deaminase-like"/>
</dbReference>
<dbReference type="InterPro" id="IPR011607">
    <property type="entry name" value="MGS-like_dom"/>
</dbReference>
<dbReference type="InterPro" id="IPR036914">
    <property type="entry name" value="MGS-like_dom_sf"/>
</dbReference>
<dbReference type="InterPro" id="IPR002695">
    <property type="entry name" value="PurH-like"/>
</dbReference>
<dbReference type="NCBIfam" id="NF002049">
    <property type="entry name" value="PRK00881.1"/>
    <property type="match status" value="1"/>
</dbReference>
<dbReference type="NCBIfam" id="TIGR00355">
    <property type="entry name" value="purH"/>
    <property type="match status" value="1"/>
</dbReference>
<dbReference type="PANTHER" id="PTHR11692:SF0">
    <property type="entry name" value="BIFUNCTIONAL PURINE BIOSYNTHESIS PROTEIN ATIC"/>
    <property type="match status" value="1"/>
</dbReference>
<dbReference type="PANTHER" id="PTHR11692">
    <property type="entry name" value="BIFUNCTIONAL PURINE BIOSYNTHESIS PROTEIN PURH"/>
    <property type="match status" value="1"/>
</dbReference>
<dbReference type="Pfam" id="PF01808">
    <property type="entry name" value="AICARFT_IMPCHas"/>
    <property type="match status" value="1"/>
</dbReference>
<dbReference type="Pfam" id="PF02142">
    <property type="entry name" value="MGS"/>
    <property type="match status" value="1"/>
</dbReference>
<dbReference type="PIRSF" id="PIRSF000414">
    <property type="entry name" value="AICARFT_IMPCHas"/>
    <property type="match status" value="1"/>
</dbReference>
<dbReference type="SMART" id="SM00798">
    <property type="entry name" value="AICARFT_IMPCHas"/>
    <property type="match status" value="1"/>
</dbReference>
<dbReference type="SMART" id="SM00851">
    <property type="entry name" value="MGS"/>
    <property type="match status" value="1"/>
</dbReference>
<dbReference type="SUPFAM" id="SSF53927">
    <property type="entry name" value="Cytidine deaminase-like"/>
    <property type="match status" value="1"/>
</dbReference>
<dbReference type="SUPFAM" id="SSF52335">
    <property type="entry name" value="Methylglyoxal synthase-like"/>
    <property type="match status" value="1"/>
</dbReference>
<dbReference type="PROSITE" id="PS51855">
    <property type="entry name" value="MGS"/>
    <property type="match status" value="1"/>
</dbReference>
<keyword id="KW-0378">Hydrolase</keyword>
<keyword id="KW-0511">Multifunctional enzyme</keyword>
<keyword id="KW-0658">Purine biosynthesis</keyword>
<keyword id="KW-0808">Transferase</keyword>
<reference key="1">
    <citation type="submission" date="2006-06" db="EMBL/GenBank/DDBJ databases">
        <title>Complete sequence of chromosome of Mesorhizobium sp. BNC1.</title>
        <authorList>
            <consortium name="US DOE Joint Genome Institute"/>
            <person name="Copeland A."/>
            <person name="Lucas S."/>
            <person name="Lapidus A."/>
            <person name="Barry K."/>
            <person name="Detter J.C."/>
            <person name="Glavina del Rio T."/>
            <person name="Hammon N."/>
            <person name="Israni S."/>
            <person name="Dalin E."/>
            <person name="Tice H."/>
            <person name="Pitluck S."/>
            <person name="Chertkov O."/>
            <person name="Brettin T."/>
            <person name="Bruce D."/>
            <person name="Han C."/>
            <person name="Tapia R."/>
            <person name="Gilna P."/>
            <person name="Schmutz J."/>
            <person name="Larimer F."/>
            <person name="Land M."/>
            <person name="Hauser L."/>
            <person name="Kyrpides N."/>
            <person name="Mikhailova N."/>
            <person name="Richardson P."/>
        </authorList>
    </citation>
    <scope>NUCLEOTIDE SEQUENCE [LARGE SCALE GENOMIC DNA]</scope>
    <source>
        <strain>BNC1</strain>
    </source>
</reference>
<name>PUR9_CHESB</name>
<protein>
    <recommendedName>
        <fullName evidence="1">Bifunctional purine biosynthesis protein PurH</fullName>
    </recommendedName>
    <domain>
        <recommendedName>
            <fullName evidence="1">Phosphoribosylaminoimidazolecarboxamide formyltransferase</fullName>
            <ecNumber evidence="1">2.1.2.3</ecNumber>
        </recommendedName>
        <alternativeName>
            <fullName evidence="1">AICAR transformylase</fullName>
        </alternativeName>
    </domain>
    <domain>
        <recommendedName>
            <fullName evidence="1">IMP cyclohydrolase</fullName>
            <ecNumber evidence="1">3.5.4.10</ecNumber>
        </recommendedName>
        <alternativeName>
            <fullName evidence="1">ATIC</fullName>
        </alternativeName>
        <alternativeName>
            <fullName evidence="1">IMP synthase</fullName>
        </alternativeName>
        <alternativeName>
            <fullName evidence="1">Inosinicase</fullName>
        </alternativeName>
    </domain>
</protein>